<comment type="similarity">
    <text evidence="1">Belongs to the universal ribosomal protein uL29 family.</text>
</comment>
<sequence length="68" mass="7668">MKTTELRQKDVAGLQAEVKELQKAHFGLRMQKATQQLNNTATLRSTRRDIARAKTILVEKQSAETSAK</sequence>
<name>RL29_ALBFT</name>
<keyword id="KW-1185">Reference proteome</keyword>
<keyword id="KW-0687">Ribonucleoprotein</keyword>
<keyword id="KW-0689">Ribosomal protein</keyword>
<accession>Q21RW6</accession>
<protein>
    <recommendedName>
        <fullName evidence="1">Large ribosomal subunit protein uL29</fullName>
    </recommendedName>
    <alternativeName>
        <fullName evidence="2">50S ribosomal protein L29</fullName>
    </alternativeName>
</protein>
<feature type="chain" id="PRO_1000007579" description="Large ribosomal subunit protein uL29">
    <location>
        <begin position="1"/>
        <end position="68"/>
    </location>
</feature>
<proteinExistence type="inferred from homology"/>
<evidence type="ECO:0000255" key="1">
    <source>
        <dbReference type="HAMAP-Rule" id="MF_00374"/>
    </source>
</evidence>
<evidence type="ECO:0000305" key="2"/>
<gene>
    <name evidence="1" type="primary">rpmC</name>
    <name type="ordered locus">Rfer_3787</name>
</gene>
<reference key="1">
    <citation type="submission" date="2006-02" db="EMBL/GenBank/DDBJ databases">
        <title>Complete sequence of chromosome of Rhodoferax ferrireducens DSM 15236.</title>
        <authorList>
            <person name="Copeland A."/>
            <person name="Lucas S."/>
            <person name="Lapidus A."/>
            <person name="Barry K."/>
            <person name="Detter J.C."/>
            <person name="Glavina del Rio T."/>
            <person name="Hammon N."/>
            <person name="Israni S."/>
            <person name="Pitluck S."/>
            <person name="Brettin T."/>
            <person name="Bruce D."/>
            <person name="Han C."/>
            <person name="Tapia R."/>
            <person name="Gilna P."/>
            <person name="Kiss H."/>
            <person name="Schmutz J."/>
            <person name="Larimer F."/>
            <person name="Land M."/>
            <person name="Kyrpides N."/>
            <person name="Ivanova N."/>
            <person name="Richardson P."/>
        </authorList>
    </citation>
    <scope>NUCLEOTIDE SEQUENCE [LARGE SCALE GENOMIC DNA]</scope>
    <source>
        <strain>ATCC BAA-621 / DSM 15236 / T118</strain>
    </source>
</reference>
<dbReference type="EMBL" id="CP000267">
    <property type="protein sequence ID" value="ABD71487.1"/>
    <property type="molecule type" value="Genomic_DNA"/>
</dbReference>
<dbReference type="RefSeq" id="WP_011466050.1">
    <property type="nucleotide sequence ID" value="NC_007908.1"/>
</dbReference>
<dbReference type="SMR" id="Q21RW6"/>
<dbReference type="STRING" id="338969.Rfer_3787"/>
<dbReference type="KEGG" id="rfr:Rfer_3787"/>
<dbReference type="eggNOG" id="COG0255">
    <property type="taxonomic scope" value="Bacteria"/>
</dbReference>
<dbReference type="HOGENOM" id="CLU_158491_1_1_4"/>
<dbReference type="OrthoDB" id="9815192at2"/>
<dbReference type="Proteomes" id="UP000008332">
    <property type="component" value="Chromosome"/>
</dbReference>
<dbReference type="GO" id="GO:0022625">
    <property type="term" value="C:cytosolic large ribosomal subunit"/>
    <property type="evidence" value="ECO:0007669"/>
    <property type="project" value="TreeGrafter"/>
</dbReference>
<dbReference type="GO" id="GO:0003735">
    <property type="term" value="F:structural constituent of ribosome"/>
    <property type="evidence" value="ECO:0007669"/>
    <property type="project" value="InterPro"/>
</dbReference>
<dbReference type="GO" id="GO:0006412">
    <property type="term" value="P:translation"/>
    <property type="evidence" value="ECO:0007669"/>
    <property type="project" value="UniProtKB-UniRule"/>
</dbReference>
<dbReference type="CDD" id="cd00427">
    <property type="entry name" value="Ribosomal_L29_HIP"/>
    <property type="match status" value="1"/>
</dbReference>
<dbReference type="FunFam" id="1.10.287.310:FF:000001">
    <property type="entry name" value="50S ribosomal protein L29"/>
    <property type="match status" value="1"/>
</dbReference>
<dbReference type="Gene3D" id="1.10.287.310">
    <property type="match status" value="1"/>
</dbReference>
<dbReference type="HAMAP" id="MF_00374">
    <property type="entry name" value="Ribosomal_uL29"/>
    <property type="match status" value="1"/>
</dbReference>
<dbReference type="InterPro" id="IPR050063">
    <property type="entry name" value="Ribosomal_protein_uL29"/>
</dbReference>
<dbReference type="InterPro" id="IPR001854">
    <property type="entry name" value="Ribosomal_uL29"/>
</dbReference>
<dbReference type="InterPro" id="IPR018254">
    <property type="entry name" value="Ribosomal_uL29_CS"/>
</dbReference>
<dbReference type="InterPro" id="IPR036049">
    <property type="entry name" value="Ribosomal_uL29_sf"/>
</dbReference>
<dbReference type="NCBIfam" id="TIGR00012">
    <property type="entry name" value="L29"/>
    <property type="match status" value="1"/>
</dbReference>
<dbReference type="PANTHER" id="PTHR10916">
    <property type="entry name" value="60S RIBOSOMAL PROTEIN L35/50S RIBOSOMAL PROTEIN L29"/>
    <property type="match status" value="1"/>
</dbReference>
<dbReference type="PANTHER" id="PTHR10916:SF0">
    <property type="entry name" value="LARGE RIBOSOMAL SUBUNIT PROTEIN UL29C"/>
    <property type="match status" value="1"/>
</dbReference>
<dbReference type="Pfam" id="PF00831">
    <property type="entry name" value="Ribosomal_L29"/>
    <property type="match status" value="1"/>
</dbReference>
<dbReference type="SUPFAM" id="SSF46561">
    <property type="entry name" value="Ribosomal protein L29 (L29p)"/>
    <property type="match status" value="1"/>
</dbReference>
<dbReference type="PROSITE" id="PS00579">
    <property type="entry name" value="RIBOSOMAL_L29"/>
    <property type="match status" value="1"/>
</dbReference>
<organism>
    <name type="scientific">Albidiferax ferrireducens (strain ATCC BAA-621 / DSM 15236 / T118)</name>
    <name type="common">Rhodoferax ferrireducens</name>
    <dbReference type="NCBI Taxonomy" id="338969"/>
    <lineage>
        <taxon>Bacteria</taxon>
        <taxon>Pseudomonadati</taxon>
        <taxon>Pseudomonadota</taxon>
        <taxon>Betaproteobacteria</taxon>
        <taxon>Burkholderiales</taxon>
        <taxon>Comamonadaceae</taxon>
        <taxon>Rhodoferax</taxon>
    </lineage>
</organism>